<protein>
    <recommendedName>
        <fullName>NADH-quinone oxidoreductase subunit L</fullName>
        <ecNumber>7.1.1.-</ecNumber>
    </recommendedName>
    <alternativeName>
        <fullName>NADH dehydrogenase I subunit L</fullName>
    </alternativeName>
    <alternativeName>
        <fullName>NDH-1 subunit L</fullName>
    </alternativeName>
</protein>
<evidence type="ECO:0000250" key="1"/>
<evidence type="ECO:0000255" key="2"/>
<evidence type="ECO:0000305" key="3"/>
<accession>Q9K1B0</accession>
<gene>
    <name type="primary">nuoL</name>
    <name type="ordered locus">NMB0257</name>
</gene>
<sequence length="674" mass="74229">MNDMTLYLIIALVPLAGSLIAGLFGNKIGRAGAHTVTILGVAVSAVLSAYVLWGFIDGSRAKFDENVYTWLTMGGLDFSVGFLVDTMTAMMMVVVTGVSLMVHIYTIGYMHDEKVGYQRFFSYISLFTFSMLMLIMSNNFIQLFFGWEAVGLVSYLLIGFYFKRPSATFANLKAFLINRVGDFGFLLGIGLVLAYFGGSLRYQDVFAYLPNVQNATIQLFPGVEWSLITVTCLLLFVGAMGKSAQFPLHVWLPDSMEGPTPISALIHAATMVTAGLFMVSRMSPIYEMSSTALSVIMVIGAITALFMGFLGVIQNDIKRVVAYSTLSQLGYMTVALGASAYSVAMFHVMTHAFFKALLFLAAGSAIIGMHHDQDMRHMGNLKKYMPVTWLTMLIGNLSLIGTPFFSGFYSKDSIIEAAKYSTLPGSGFAYFAVLASVFVTAFYAFRQYFMVFHGEEKWRSLPEHHSDGHGEEHHGLGKNDNPHESPLVVTLPLILLAVPSVIIGYIAIEPMLYGDFFKDVIFVNADAHPTIHIMKEEFHGALAMVSHSLHSPVLYLAIAGVLSAWLLYVKLPHLPAKIAQTFRPIYVLFENKYYLDALYFNVFAKGTRALGTFFWKVGDTAIIDNGIVNGSAKLVGAIAAQVRKAQTGFIYTYAAAMVFGVLVLLGMTFWGLFR</sequence>
<proteinExistence type="inferred from homology"/>
<feature type="chain" id="PRO_0000118220" description="NADH-quinone oxidoreductase subunit L">
    <location>
        <begin position="1"/>
        <end position="674"/>
    </location>
</feature>
<feature type="transmembrane region" description="Helical" evidence="2">
    <location>
        <begin position="4"/>
        <end position="24"/>
    </location>
</feature>
<feature type="transmembrane region" description="Helical" evidence="2">
    <location>
        <begin position="36"/>
        <end position="56"/>
    </location>
</feature>
<feature type="transmembrane region" description="Helical" evidence="2">
    <location>
        <begin position="67"/>
        <end position="87"/>
    </location>
</feature>
<feature type="transmembrane region" description="Helical" evidence="2">
    <location>
        <begin position="90"/>
        <end position="110"/>
    </location>
</feature>
<feature type="transmembrane region" description="Helical" evidence="2">
    <location>
        <begin position="115"/>
        <end position="135"/>
    </location>
</feature>
<feature type="transmembrane region" description="Helical" evidence="2">
    <location>
        <begin position="140"/>
        <end position="160"/>
    </location>
</feature>
<feature type="transmembrane region" description="Helical" evidence="2">
    <location>
        <begin position="180"/>
        <end position="200"/>
    </location>
</feature>
<feature type="transmembrane region" description="Helical" evidence="2">
    <location>
        <begin position="219"/>
        <end position="239"/>
    </location>
</feature>
<feature type="transmembrane region" description="Helical" evidence="2">
    <location>
        <begin position="259"/>
        <end position="279"/>
    </location>
</feature>
<feature type="transmembrane region" description="Helical" evidence="2">
    <location>
        <begin position="293"/>
        <end position="313"/>
    </location>
</feature>
<feature type="transmembrane region" description="Helical" evidence="2">
    <location>
        <begin position="348"/>
        <end position="368"/>
    </location>
</feature>
<feature type="transmembrane region" description="Helical" evidence="2">
    <location>
        <begin position="385"/>
        <end position="405"/>
    </location>
</feature>
<feature type="transmembrane region" description="Helical" evidence="2">
    <location>
        <begin position="425"/>
        <end position="445"/>
    </location>
</feature>
<feature type="transmembrane region" description="Helical" evidence="2">
    <location>
        <begin position="488"/>
        <end position="508"/>
    </location>
</feature>
<feature type="transmembrane region" description="Helical" evidence="2">
    <location>
        <begin position="549"/>
        <end position="569"/>
    </location>
</feature>
<feature type="transmembrane region" description="Helical" evidence="2">
    <location>
        <begin position="653"/>
        <end position="673"/>
    </location>
</feature>
<organism>
    <name type="scientific">Neisseria meningitidis serogroup B (strain ATCC BAA-335 / MC58)</name>
    <dbReference type="NCBI Taxonomy" id="122586"/>
    <lineage>
        <taxon>Bacteria</taxon>
        <taxon>Pseudomonadati</taxon>
        <taxon>Pseudomonadota</taxon>
        <taxon>Betaproteobacteria</taxon>
        <taxon>Neisseriales</taxon>
        <taxon>Neisseriaceae</taxon>
        <taxon>Neisseria</taxon>
    </lineage>
</organism>
<keyword id="KW-1003">Cell membrane</keyword>
<keyword id="KW-0472">Membrane</keyword>
<keyword id="KW-0520">NAD</keyword>
<keyword id="KW-0874">Quinone</keyword>
<keyword id="KW-1185">Reference proteome</keyword>
<keyword id="KW-1278">Translocase</keyword>
<keyword id="KW-0812">Transmembrane</keyword>
<keyword id="KW-1133">Transmembrane helix</keyword>
<keyword id="KW-0830">Ubiquinone</keyword>
<dbReference type="EC" id="7.1.1.-"/>
<dbReference type="EMBL" id="AE002098">
    <property type="protein sequence ID" value="AAF40711.1"/>
    <property type="molecule type" value="Genomic_DNA"/>
</dbReference>
<dbReference type="PIR" id="D81220">
    <property type="entry name" value="D81220"/>
</dbReference>
<dbReference type="RefSeq" id="NP_273313.1">
    <property type="nucleotide sequence ID" value="NC_003112.2"/>
</dbReference>
<dbReference type="RefSeq" id="WP_002221913.1">
    <property type="nucleotide sequence ID" value="NC_003112.2"/>
</dbReference>
<dbReference type="SMR" id="Q9K1B0"/>
<dbReference type="FunCoup" id="Q9K1B0">
    <property type="interactions" value="171"/>
</dbReference>
<dbReference type="STRING" id="122586.NMB0257"/>
<dbReference type="PaxDb" id="122586-NMB0257"/>
<dbReference type="KEGG" id="nme:NMB0257"/>
<dbReference type="PATRIC" id="fig|122586.8.peg.320"/>
<dbReference type="HOGENOM" id="CLU_007100_6_0_4"/>
<dbReference type="InParanoid" id="Q9K1B0"/>
<dbReference type="OrthoDB" id="9811798at2"/>
<dbReference type="Proteomes" id="UP000000425">
    <property type="component" value="Chromosome"/>
</dbReference>
<dbReference type="GO" id="GO:0005886">
    <property type="term" value="C:plasma membrane"/>
    <property type="evidence" value="ECO:0007669"/>
    <property type="project" value="UniProtKB-SubCell"/>
</dbReference>
<dbReference type="GO" id="GO:0008137">
    <property type="term" value="F:NADH dehydrogenase (ubiquinone) activity"/>
    <property type="evidence" value="ECO:0007669"/>
    <property type="project" value="InterPro"/>
</dbReference>
<dbReference type="GO" id="GO:0048038">
    <property type="term" value="F:quinone binding"/>
    <property type="evidence" value="ECO:0007669"/>
    <property type="project" value="UniProtKB-KW"/>
</dbReference>
<dbReference type="GO" id="GO:0042773">
    <property type="term" value="P:ATP synthesis coupled electron transport"/>
    <property type="evidence" value="ECO:0007669"/>
    <property type="project" value="InterPro"/>
</dbReference>
<dbReference type="GO" id="GO:0015990">
    <property type="term" value="P:electron transport coupled proton transport"/>
    <property type="evidence" value="ECO:0000318"/>
    <property type="project" value="GO_Central"/>
</dbReference>
<dbReference type="Gene3D" id="1.20.5.2700">
    <property type="match status" value="1"/>
</dbReference>
<dbReference type="InterPro" id="IPR018393">
    <property type="entry name" value="NADHpl_OxRdtase_5_subgr"/>
</dbReference>
<dbReference type="InterPro" id="IPR001750">
    <property type="entry name" value="ND/Mrp_TM"/>
</dbReference>
<dbReference type="InterPro" id="IPR003945">
    <property type="entry name" value="NU5C-like"/>
</dbReference>
<dbReference type="InterPro" id="IPR001516">
    <property type="entry name" value="Proton_antipo_N"/>
</dbReference>
<dbReference type="NCBIfam" id="TIGR01974">
    <property type="entry name" value="NDH_I_L"/>
    <property type="match status" value="1"/>
</dbReference>
<dbReference type="NCBIfam" id="NF005141">
    <property type="entry name" value="PRK06590.1"/>
    <property type="match status" value="1"/>
</dbReference>
<dbReference type="PANTHER" id="PTHR42829">
    <property type="entry name" value="NADH-UBIQUINONE OXIDOREDUCTASE CHAIN 5"/>
    <property type="match status" value="1"/>
</dbReference>
<dbReference type="PANTHER" id="PTHR42829:SF2">
    <property type="entry name" value="NADH-UBIQUINONE OXIDOREDUCTASE CHAIN 5"/>
    <property type="match status" value="1"/>
</dbReference>
<dbReference type="Pfam" id="PF00361">
    <property type="entry name" value="Proton_antipo_M"/>
    <property type="match status" value="1"/>
</dbReference>
<dbReference type="Pfam" id="PF00662">
    <property type="entry name" value="Proton_antipo_N"/>
    <property type="match status" value="1"/>
</dbReference>
<dbReference type="PRINTS" id="PR01434">
    <property type="entry name" value="NADHDHGNASE5"/>
</dbReference>
<dbReference type="PRINTS" id="PR01435">
    <property type="entry name" value="NPOXDRDTASE5"/>
</dbReference>
<comment type="function">
    <text evidence="1">NDH-1 shuttles electrons from NADH, via FMN and iron-sulfur (Fe-S) centers, to quinones in the respiratory chain. The immediate electron acceptor for the enzyme in this species is believed to be ubiquinone. Couples the redox reaction to proton translocation (for every two electrons transferred, four hydrogen ions are translocated across the cytoplasmic membrane), and thus conserves the redox energy in a proton gradient (By similarity).</text>
</comment>
<comment type="catalytic activity">
    <reaction>
        <text>a quinone + NADH + 5 H(+)(in) = a quinol + NAD(+) + 4 H(+)(out)</text>
        <dbReference type="Rhea" id="RHEA:57888"/>
        <dbReference type="ChEBI" id="CHEBI:15378"/>
        <dbReference type="ChEBI" id="CHEBI:24646"/>
        <dbReference type="ChEBI" id="CHEBI:57540"/>
        <dbReference type="ChEBI" id="CHEBI:57945"/>
        <dbReference type="ChEBI" id="CHEBI:132124"/>
    </reaction>
</comment>
<comment type="subcellular location">
    <subcellularLocation>
        <location evidence="3">Cell membrane</location>
        <topology evidence="3">Multi-pass membrane protein</topology>
    </subcellularLocation>
</comment>
<comment type="similarity">
    <text evidence="3">Belongs to the complex I subunit 5 family.</text>
</comment>
<reference key="1">
    <citation type="journal article" date="2000" name="Science">
        <title>Complete genome sequence of Neisseria meningitidis serogroup B strain MC58.</title>
        <authorList>
            <person name="Tettelin H."/>
            <person name="Saunders N.J."/>
            <person name="Heidelberg J.F."/>
            <person name="Jeffries A.C."/>
            <person name="Nelson K.E."/>
            <person name="Eisen J.A."/>
            <person name="Ketchum K.A."/>
            <person name="Hood D.W."/>
            <person name="Peden J.F."/>
            <person name="Dodson R.J."/>
            <person name="Nelson W.C."/>
            <person name="Gwinn M.L."/>
            <person name="DeBoy R.T."/>
            <person name="Peterson J.D."/>
            <person name="Hickey E.K."/>
            <person name="Haft D.H."/>
            <person name="Salzberg S.L."/>
            <person name="White O."/>
            <person name="Fleischmann R.D."/>
            <person name="Dougherty B.A."/>
            <person name="Mason T.M."/>
            <person name="Ciecko A."/>
            <person name="Parksey D.S."/>
            <person name="Blair E."/>
            <person name="Cittone H."/>
            <person name="Clark E.B."/>
            <person name="Cotton M.D."/>
            <person name="Utterback T.R."/>
            <person name="Khouri H.M."/>
            <person name="Qin H."/>
            <person name="Vamathevan J.J."/>
            <person name="Gill J."/>
            <person name="Scarlato V."/>
            <person name="Masignani V."/>
            <person name="Pizza M."/>
            <person name="Grandi G."/>
            <person name="Sun L."/>
            <person name="Smith H.O."/>
            <person name="Fraser C.M."/>
            <person name="Moxon E.R."/>
            <person name="Rappuoli R."/>
            <person name="Venter J.C."/>
        </authorList>
    </citation>
    <scope>NUCLEOTIDE SEQUENCE [LARGE SCALE GENOMIC DNA]</scope>
    <source>
        <strain>ATCC BAA-335 / MC58</strain>
    </source>
</reference>
<name>NUOL_NEIMB</name>